<reference key="1">
    <citation type="submission" date="2005-07" db="EMBL/GenBank/DDBJ databases">
        <authorList>
            <person name="Mural R.J."/>
            <person name="Istrail S."/>
            <person name="Sutton G.G."/>
            <person name="Florea L."/>
            <person name="Halpern A.L."/>
            <person name="Mobarry C.M."/>
            <person name="Lippert R."/>
            <person name="Walenz B."/>
            <person name="Shatkay H."/>
            <person name="Dew I."/>
            <person name="Miller J.R."/>
            <person name="Flanigan M.J."/>
            <person name="Edwards N.J."/>
            <person name="Bolanos R."/>
            <person name="Fasulo D."/>
            <person name="Halldorsson B.V."/>
            <person name="Hannenhalli S."/>
            <person name="Turner R."/>
            <person name="Yooseph S."/>
            <person name="Lu F."/>
            <person name="Nusskern D.R."/>
            <person name="Shue B.C."/>
            <person name="Zheng X.H."/>
            <person name="Zhong F."/>
            <person name="Delcher A.L."/>
            <person name="Huson D.H."/>
            <person name="Kravitz S.A."/>
            <person name="Mouchard L."/>
            <person name="Reinert K."/>
            <person name="Remington K.A."/>
            <person name="Clark A.G."/>
            <person name="Waterman M.S."/>
            <person name="Eichler E.E."/>
            <person name="Adams M.D."/>
            <person name="Hunkapiller M.W."/>
            <person name="Myers E.W."/>
            <person name="Venter J.C."/>
        </authorList>
    </citation>
    <scope>NUCLEOTIDE SEQUENCE [LARGE SCALE GENOMIC DNA]</scope>
</reference>
<reference key="2">
    <citation type="journal article" date="2004" name="Genome Res.">
        <title>The status, quality, and expansion of the NIH full-length cDNA project: the Mammalian Gene Collection (MGC).</title>
        <authorList>
            <consortium name="The MGC Project Team"/>
        </authorList>
    </citation>
    <scope>NUCLEOTIDE SEQUENCE [LARGE SCALE MRNA]</scope>
    <source>
        <tissue>Brain</tissue>
    </source>
</reference>
<gene>
    <name type="primary">HIGD2B</name>
    <name type="synonym">HIGD2BP</name>
</gene>
<accession>Q4VC39</accession>
<name>HIG2B_HUMAN</name>
<proteinExistence type="evidence at protein level"/>
<evidence type="ECO:0000255" key="1"/>
<evidence type="ECO:0000255" key="2">
    <source>
        <dbReference type="PROSITE-ProRule" id="PRU00836"/>
    </source>
</evidence>
<sequence length="106" mass="11405">MATLGFVTPEAPFESSKPPIFEGLSPTVYSNPEGFKEKFLRKTRENPVVPIGFLCTAAVLTNGLYCFHQGNSQCSRLMMHTQIAAQGFTIAAILLGLAATAMKSPP</sequence>
<comment type="interaction">
    <interactant intactId="EBI-12881610">
        <id>Q4VC39</id>
    </interactant>
    <interactant intactId="EBI-347538">
        <id>Q9Y4H4</id>
        <label>GPSM3</label>
    </interactant>
    <organismsDiffer>false</organismsDiffer>
    <experiments>3</experiments>
</comment>
<comment type="interaction">
    <interactant intactId="EBI-12881610">
        <id>Q4VC39</id>
    </interactant>
    <interactant intactId="EBI-17236143">
        <id>Q12837</id>
        <label>POU4F2</label>
    </interactant>
    <organismsDiffer>false</organismsDiffer>
    <experiments>3</experiments>
</comment>
<comment type="subcellular location">
    <subcellularLocation>
        <location evidence="2">Membrane</location>
        <topology evidence="2">Multi-pass membrane protein</topology>
    </subcellularLocation>
</comment>
<feature type="chain" id="PRO_0000344213" description="HIG1 domain family member 2B">
    <location>
        <begin position="1"/>
        <end position="106"/>
    </location>
</feature>
<feature type="topological domain" description="Cytoplasmic" evidence="1">
    <location>
        <begin position="1"/>
        <end position="46"/>
    </location>
</feature>
<feature type="transmembrane region" description="Helical" evidence="2">
    <location>
        <begin position="47"/>
        <end position="67"/>
    </location>
</feature>
<feature type="topological domain" description="Extracellular" evidence="1">
    <location>
        <begin position="68"/>
        <end position="81"/>
    </location>
</feature>
<feature type="transmembrane region" description="Helical" evidence="2">
    <location>
        <begin position="82"/>
        <end position="102"/>
    </location>
</feature>
<feature type="topological domain" description="Cytoplasmic" evidence="1">
    <location>
        <begin position="103"/>
        <end position="106"/>
    </location>
</feature>
<feature type="domain" description="HIG1" evidence="2">
    <location>
        <begin position="20"/>
        <end position="106"/>
    </location>
</feature>
<dbReference type="EMBL" id="CH471082">
    <property type="protein sequence ID" value="EAW77911.1"/>
    <property type="molecule type" value="Genomic_DNA"/>
</dbReference>
<dbReference type="EMBL" id="BC040890">
    <property type="status" value="NOT_ANNOTATED_CDS"/>
    <property type="molecule type" value="mRNA"/>
</dbReference>
<dbReference type="CCDS" id="CCDS86473.1"/>
<dbReference type="RefSeq" id="NP_001337861.1">
    <property type="nucleotide sequence ID" value="NM_001350932.3"/>
</dbReference>
<dbReference type="RefSeq" id="XP_024305605.1">
    <property type="nucleotide sequence ID" value="XM_024449837.2"/>
</dbReference>
<dbReference type="RefSeq" id="XP_024305606.1">
    <property type="nucleotide sequence ID" value="XM_024449838.2"/>
</dbReference>
<dbReference type="RefSeq" id="XP_024305607.1">
    <property type="nucleotide sequence ID" value="XM_024449839.2"/>
</dbReference>
<dbReference type="RefSeq" id="XP_024305608.1">
    <property type="nucleotide sequence ID" value="XM_024449840.2"/>
</dbReference>
<dbReference type="RefSeq" id="XP_024305609.1">
    <property type="nucleotide sequence ID" value="XM_024449841.2"/>
</dbReference>
<dbReference type="RefSeq" id="XP_024305610.1">
    <property type="nucleotide sequence ID" value="XM_024449842.2"/>
</dbReference>
<dbReference type="RefSeq" id="XP_054233242.1">
    <property type="nucleotide sequence ID" value="XM_054377267.1"/>
</dbReference>
<dbReference type="RefSeq" id="XP_054233243.1">
    <property type="nucleotide sequence ID" value="XM_054377268.1"/>
</dbReference>
<dbReference type="RefSeq" id="XP_054233244.1">
    <property type="nucleotide sequence ID" value="XM_054377269.1"/>
</dbReference>
<dbReference type="RefSeq" id="XP_054233245.1">
    <property type="nucleotide sequence ID" value="XM_054377270.1"/>
</dbReference>
<dbReference type="RefSeq" id="XP_054233246.1">
    <property type="nucleotide sequence ID" value="XM_054377271.1"/>
</dbReference>
<dbReference type="RefSeq" id="XP_054233247.1">
    <property type="nucleotide sequence ID" value="XM_054377272.1"/>
</dbReference>
<dbReference type="FunCoup" id="Q4VC39">
    <property type="interactions" value="395"/>
</dbReference>
<dbReference type="IntAct" id="Q4VC39">
    <property type="interactions" value="2"/>
</dbReference>
<dbReference type="STRING" id="9606.ENSP00000307951"/>
<dbReference type="BioMuta" id="HIGD2B"/>
<dbReference type="DMDM" id="74753804"/>
<dbReference type="PaxDb" id="9606-ENSP00000307951"/>
<dbReference type="Antibodypedia" id="7424">
    <property type="antibodies" value="4 antibodies from 4 providers"/>
</dbReference>
<dbReference type="Ensembl" id="ENST00000311755.6">
    <property type="protein sequence ID" value="ENSP00000307951.3"/>
    <property type="gene ID" value="ENSG00000175202.6"/>
</dbReference>
<dbReference type="GeneID" id="123346"/>
<dbReference type="MANE-Select" id="ENST00000311755.6">
    <property type="protein sequence ID" value="ENSP00000307951.3"/>
    <property type="RefSeq nucleotide sequence ID" value="NM_001350932.3"/>
    <property type="RefSeq protein sequence ID" value="NP_001337861.1"/>
</dbReference>
<dbReference type="UCSC" id="uc059lck.1">
    <property type="organism name" value="human"/>
</dbReference>
<dbReference type="AGR" id="HGNC:26984"/>
<dbReference type="GeneCards" id="HIGD2B"/>
<dbReference type="HGNC" id="HGNC:26984">
    <property type="gene designation" value="HIGD2B"/>
</dbReference>
<dbReference type="HPA" id="ENSG00000175202">
    <property type="expression patterns" value="Tissue enriched (testis)"/>
</dbReference>
<dbReference type="neXtProt" id="NX_Q4VC39"/>
<dbReference type="VEuPathDB" id="HostDB:ENSG00000175202"/>
<dbReference type="eggNOG" id="KOG4431">
    <property type="taxonomic scope" value="Eukaryota"/>
</dbReference>
<dbReference type="GeneTree" id="ENSGT00910000144291"/>
<dbReference type="HOGENOM" id="CLU_087356_4_0_1"/>
<dbReference type="InParanoid" id="Q4VC39"/>
<dbReference type="OMA" id="HAWIAAQ"/>
<dbReference type="OrthoDB" id="6604018at2759"/>
<dbReference type="PAN-GO" id="Q4VC39">
    <property type="GO annotations" value="2 GO annotations based on evolutionary models"/>
</dbReference>
<dbReference type="PhylomeDB" id="Q4VC39"/>
<dbReference type="TreeFam" id="TF314628"/>
<dbReference type="PathwayCommons" id="Q4VC39"/>
<dbReference type="SignaLink" id="Q4VC39"/>
<dbReference type="Pharos" id="Q4VC39">
    <property type="development level" value="Tdark"/>
</dbReference>
<dbReference type="Proteomes" id="UP000005640">
    <property type="component" value="Chromosome 15"/>
</dbReference>
<dbReference type="RNAct" id="Q4VC39">
    <property type="molecule type" value="protein"/>
</dbReference>
<dbReference type="Bgee" id="ENSG00000175202">
    <property type="expression patterns" value="Expressed in primordial germ cell in gonad and 9 other cell types or tissues"/>
</dbReference>
<dbReference type="GO" id="GO:0016020">
    <property type="term" value="C:membrane"/>
    <property type="evidence" value="ECO:0007669"/>
    <property type="project" value="UniProtKB-SubCell"/>
</dbReference>
<dbReference type="GO" id="GO:0005739">
    <property type="term" value="C:mitochondrion"/>
    <property type="evidence" value="ECO:0000318"/>
    <property type="project" value="GO_Central"/>
</dbReference>
<dbReference type="GO" id="GO:0097250">
    <property type="term" value="P:mitochondrial respirasome assembly"/>
    <property type="evidence" value="ECO:0000318"/>
    <property type="project" value="GO_Central"/>
</dbReference>
<dbReference type="Gene3D" id="6.10.140.1320">
    <property type="match status" value="1"/>
</dbReference>
<dbReference type="InterPro" id="IPR007667">
    <property type="entry name" value="Hypoxia_induced_domain"/>
</dbReference>
<dbReference type="InterPro" id="IPR050355">
    <property type="entry name" value="RCF1"/>
</dbReference>
<dbReference type="PANTHER" id="PTHR12297:SF8">
    <property type="entry name" value="HIG1 DOMAIN FAMILY MEMBER 2B-RELATED"/>
    <property type="match status" value="1"/>
</dbReference>
<dbReference type="PANTHER" id="PTHR12297">
    <property type="entry name" value="HYPOXIA-INDUCBILE GENE 1 HIG1 -RELATED"/>
    <property type="match status" value="1"/>
</dbReference>
<dbReference type="Pfam" id="PF04588">
    <property type="entry name" value="HIG_1_N"/>
    <property type="match status" value="1"/>
</dbReference>
<dbReference type="PROSITE" id="PS51503">
    <property type="entry name" value="HIG1"/>
    <property type="match status" value="1"/>
</dbReference>
<keyword id="KW-0472">Membrane</keyword>
<keyword id="KW-1185">Reference proteome</keyword>
<keyword id="KW-0812">Transmembrane</keyword>
<keyword id="KW-1133">Transmembrane helix</keyword>
<protein>
    <recommendedName>
        <fullName>HIG1 domain family member 2B</fullName>
    </recommendedName>
</protein>
<organism>
    <name type="scientific">Homo sapiens</name>
    <name type="common">Human</name>
    <dbReference type="NCBI Taxonomy" id="9606"/>
    <lineage>
        <taxon>Eukaryota</taxon>
        <taxon>Metazoa</taxon>
        <taxon>Chordata</taxon>
        <taxon>Craniata</taxon>
        <taxon>Vertebrata</taxon>
        <taxon>Euteleostomi</taxon>
        <taxon>Mammalia</taxon>
        <taxon>Eutheria</taxon>
        <taxon>Euarchontoglires</taxon>
        <taxon>Primates</taxon>
        <taxon>Haplorrhini</taxon>
        <taxon>Catarrhini</taxon>
        <taxon>Hominidae</taxon>
        <taxon>Homo</taxon>
    </lineage>
</organism>